<accession>Q8NGX5</accession>
<accession>Q6IFS2</accession>
<evidence type="ECO:0000255" key="1"/>
<evidence type="ECO:0000255" key="2">
    <source>
        <dbReference type="PROSITE-ProRule" id="PRU00521"/>
    </source>
</evidence>
<evidence type="ECO:0000305" key="3"/>
<comment type="function">
    <text evidence="3">Odorant receptor.</text>
</comment>
<comment type="subcellular location">
    <subcellularLocation>
        <location>Cell membrane</location>
        <topology>Multi-pass membrane protein</topology>
    </subcellularLocation>
</comment>
<comment type="similarity">
    <text evidence="2">Belongs to the G-protein coupled receptor 1 family.</text>
</comment>
<comment type="online information" name="Human Olfactory Receptor Data Exploratorium (HORDE)">
    <link uri="http://genome.weizmann.ac.il/horde/card/index/symbol:OR10K1"/>
</comment>
<sequence length="313" mass="35079">MEQVNKTVVREFVVLGFSSLARLQQLLFVIFLLLYLFTLGTNAIIISTIVLDRALHTPMYFFLAILSCSEICYTFVIVPKMLVDLLSQKKTISFLGCAIQMFSFLFFGSSHSFLLAAMGYDRYMAICNPLRYSVLMGHGVCMGLMAAACACGFTVSLVTTSLVFHLPFHSSNQLHHFFCDISPVLKLASQHSGFSQLVIFMLGVFALVIPLLLILVSYIRIISAILKIPSSVGRYKTFSTCASHLIVVTVHYSCASFIYLRPKTNYTSSQDTLISVSYTILTPLFNPMIYSLRNKEFKSALRRTIGQTFYPLS</sequence>
<gene>
    <name type="primary">OR10K1</name>
</gene>
<proteinExistence type="evidence at transcript level"/>
<reference key="1">
    <citation type="submission" date="2001-07" db="EMBL/GenBank/DDBJ databases">
        <title>Genome-wide discovery and analysis of human seven transmembrane helix receptor genes.</title>
        <authorList>
            <person name="Suwa M."/>
            <person name="Sato T."/>
            <person name="Okouchi I."/>
            <person name="Arita M."/>
            <person name="Futami K."/>
            <person name="Matsumoto S."/>
            <person name="Tsutsumi S."/>
            <person name="Aburatani H."/>
            <person name="Asai K."/>
            <person name="Akiyama Y."/>
        </authorList>
    </citation>
    <scope>NUCLEOTIDE SEQUENCE [GENOMIC DNA]</scope>
</reference>
<reference key="2">
    <citation type="journal article" date="2006" name="Nature">
        <title>The DNA sequence and biological annotation of human chromosome 1.</title>
        <authorList>
            <person name="Gregory S.G."/>
            <person name="Barlow K.F."/>
            <person name="McLay K.E."/>
            <person name="Kaul R."/>
            <person name="Swarbreck D."/>
            <person name="Dunham A."/>
            <person name="Scott C.E."/>
            <person name="Howe K.L."/>
            <person name="Woodfine K."/>
            <person name="Spencer C.C.A."/>
            <person name="Jones M.C."/>
            <person name="Gillson C."/>
            <person name="Searle S."/>
            <person name="Zhou Y."/>
            <person name="Kokocinski F."/>
            <person name="McDonald L."/>
            <person name="Evans R."/>
            <person name="Phillips K."/>
            <person name="Atkinson A."/>
            <person name="Cooper R."/>
            <person name="Jones C."/>
            <person name="Hall R.E."/>
            <person name="Andrews T.D."/>
            <person name="Lloyd C."/>
            <person name="Ainscough R."/>
            <person name="Almeida J.P."/>
            <person name="Ambrose K.D."/>
            <person name="Anderson F."/>
            <person name="Andrew R.W."/>
            <person name="Ashwell R.I.S."/>
            <person name="Aubin K."/>
            <person name="Babbage A.K."/>
            <person name="Bagguley C.L."/>
            <person name="Bailey J."/>
            <person name="Beasley H."/>
            <person name="Bethel G."/>
            <person name="Bird C.P."/>
            <person name="Bray-Allen S."/>
            <person name="Brown J.Y."/>
            <person name="Brown A.J."/>
            <person name="Buckley D."/>
            <person name="Burton J."/>
            <person name="Bye J."/>
            <person name="Carder C."/>
            <person name="Chapman J.C."/>
            <person name="Clark S.Y."/>
            <person name="Clarke G."/>
            <person name="Clee C."/>
            <person name="Cobley V."/>
            <person name="Collier R.E."/>
            <person name="Corby N."/>
            <person name="Coville G.J."/>
            <person name="Davies J."/>
            <person name="Deadman R."/>
            <person name="Dunn M."/>
            <person name="Earthrowl M."/>
            <person name="Ellington A.G."/>
            <person name="Errington H."/>
            <person name="Frankish A."/>
            <person name="Frankland J."/>
            <person name="French L."/>
            <person name="Garner P."/>
            <person name="Garnett J."/>
            <person name="Gay L."/>
            <person name="Ghori M.R.J."/>
            <person name="Gibson R."/>
            <person name="Gilby L.M."/>
            <person name="Gillett W."/>
            <person name="Glithero R.J."/>
            <person name="Grafham D.V."/>
            <person name="Griffiths C."/>
            <person name="Griffiths-Jones S."/>
            <person name="Grocock R."/>
            <person name="Hammond S."/>
            <person name="Harrison E.S.I."/>
            <person name="Hart E."/>
            <person name="Haugen E."/>
            <person name="Heath P.D."/>
            <person name="Holmes S."/>
            <person name="Holt K."/>
            <person name="Howden P.J."/>
            <person name="Hunt A.R."/>
            <person name="Hunt S.E."/>
            <person name="Hunter G."/>
            <person name="Isherwood J."/>
            <person name="James R."/>
            <person name="Johnson C."/>
            <person name="Johnson D."/>
            <person name="Joy A."/>
            <person name="Kay M."/>
            <person name="Kershaw J.K."/>
            <person name="Kibukawa M."/>
            <person name="Kimberley A.M."/>
            <person name="King A."/>
            <person name="Knights A.J."/>
            <person name="Lad H."/>
            <person name="Laird G."/>
            <person name="Lawlor S."/>
            <person name="Leongamornlert D.A."/>
            <person name="Lloyd D.M."/>
            <person name="Loveland J."/>
            <person name="Lovell J."/>
            <person name="Lush M.J."/>
            <person name="Lyne R."/>
            <person name="Martin S."/>
            <person name="Mashreghi-Mohammadi M."/>
            <person name="Matthews L."/>
            <person name="Matthews N.S.W."/>
            <person name="McLaren S."/>
            <person name="Milne S."/>
            <person name="Mistry S."/>
            <person name="Moore M.J.F."/>
            <person name="Nickerson T."/>
            <person name="O'Dell C.N."/>
            <person name="Oliver K."/>
            <person name="Palmeiri A."/>
            <person name="Palmer S.A."/>
            <person name="Parker A."/>
            <person name="Patel D."/>
            <person name="Pearce A.V."/>
            <person name="Peck A.I."/>
            <person name="Pelan S."/>
            <person name="Phelps K."/>
            <person name="Phillimore B.J."/>
            <person name="Plumb R."/>
            <person name="Rajan J."/>
            <person name="Raymond C."/>
            <person name="Rouse G."/>
            <person name="Saenphimmachak C."/>
            <person name="Sehra H.K."/>
            <person name="Sheridan E."/>
            <person name="Shownkeen R."/>
            <person name="Sims S."/>
            <person name="Skuce C.D."/>
            <person name="Smith M."/>
            <person name="Steward C."/>
            <person name="Subramanian S."/>
            <person name="Sycamore N."/>
            <person name="Tracey A."/>
            <person name="Tromans A."/>
            <person name="Van Helmond Z."/>
            <person name="Wall M."/>
            <person name="Wallis J.M."/>
            <person name="White S."/>
            <person name="Whitehead S.L."/>
            <person name="Wilkinson J.E."/>
            <person name="Willey D.L."/>
            <person name="Williams H."/>
            <person name="Wilming L."/>
            <person name="Wray P.W."/>
            <person name="Wu Z."/>
            <person name="Coulson A."/>
            <person name="Vaudin M."/>
            <person name="Sulston J.E."/>
            <person name="Durbin R.M."/>
            <person name="Hubbard T."/>
            <person name="Wooster R."/>
            <person name="Dunham I."/>
            <person name="Carter N.P."/>
            <person name="McVean G."/>
            <person name="Ross M.T."/>
            <person name="Harrow J."/>
            <person name="Olson M.V."/>
            <person name="Beck S."/>
            <person name="Rogers J."/>
            <person name="Bentley D.R."/>
        </authorList>
    </citation>
    <scope>NUCLEOTIDE SEQUENCE [LARGE SCALE GENOMIC DNA]</scope>
</reference>
<reference key="3">
    <citation type="submission" date="2005-09" db="EMBL/GenBank/DDBJ databases">
        <authorList>
            <person name="Mural R.J."/>
            <person name="Istrail S."/>
            <person name="Sutton G.G."/>
            <person name="Florea L."/>
            <person name="Halpern A.L."/>
            <person name="Mobarry C.M."/>
            <person name="Lippert R."/>
            <person name="Walenz B."/>
            <person name="Shatkay H."/>
            <person name="Dew I."/>
            <person name="Miller J.R."/>
            <person name="Flanigan M.J."/>
            <person name="Edwards N.J."/>
            <person name="Bolanos R."/>
            <person name="Fasulo D."/>
            <person name="Halldorsson B.V."/>
            <person name="Hannenhalli S."/>
            <person name="Turner R."/>
            <person name="Yooseph S."/>
            <person name="Lu F."/>
            <person name="Nusskern D.R."/>
            <person name="Shue B.C."/>
            <person name="Zheng X.H."/>
            <person name="Zhong F."/>
            <person name="Delcher A.L."/>
            <person name="Huson D.H."/>
            <person name="Kravitz S.A."/>
            <person name="Mouchard L."/>
            <person name="Reinert K."/>
            <person name="Remington K.A."/>
            <person name="Clark A.G."/>
            <person name="Waterman M.S."/>
            <person name="Eichler E.E."/>
            <person name="Adams M.D."/>
            <person name="Hunkapiller M.W."/>
            <person name="Myers E.W."/>
            <person name="Venter J.C."/>
        </authorList>
    </citation>
    <scope>NUCLEOTIDE SEQUENCE [LARGE SCALE GENOMIC DNA]</scope>
</reference>
<reference key="4">
    <citation type="journal article" date="2004" name="Genome Res.">
        <title>The status, quality, and expansion of the NIH full-length cDNA project: the Mammalian Gene Collection (MGC).</title>
        <authorList>
            <consortium name="The MGC Project Team"/>
        </authorList>
    </citation>
    <scope>NUCLEOTIDE SEQUENCE [LARGE SCALE MRNA]</scope>
</reference>
<reference key="5">
    <citation type="journal article" date="2004" name="Proc. Natl. Acad. Sci. U.S.A.">
        <title>The human olfactory receptor gene family.</title>
        <authorList>
            <person name="Malnic B."/>
            <person name="Godfrey P.A."/>
            <person name="Buck L.B."/>
        </authorList>
    </citation>
    <scope>IDENTIFICATION</scope>
</reference>
<reference key="6">
    <citation type="journal article" date="2004" name="Proc. Natl. Acad. Sci. U.S.A.">
        <authorList>
            <person name="Malnic B."/>
            <person name="Godfrey P.A."/>
            <person name="Buck L.B."/>
        </authorList>
    </citation>
    <scope>ERRATUM OF PUBMED:14983052</scope>
</reference>
<feature type="chain" id="PRO_0000150711" description="Olfactory receptor 10K1">
    <location>
        <begin position="1"/>
        <end position="313"/>
    </location>
</feature>
<feature type="topological domain" description="Extracellular" evidence="1">
    <location>
        <begin position="1"/>
        <end position="25"/>
    </location>
</feature>
<feature type="transmembrane region" description="Helical; Name=1" evidence="1">
    <location>
        <begin position="26"/>
        <end position="46"/>
    </location>
</feature>
<feature type="topological domain" description="Cytoplasmic" evidence="1">
    <location>
        <begin position="47"/>
        <end position="54"/>
    </location>
</feature>
<feature type="transmembrane region" description="Helical; Name=2" evidence="1">
    <location>
        <begin position="55"/>
        <end position="75"/>
    </location>
</feature>
<feature type="topological domain" description="Extracellular" evidence="1">
    <location>
        <begin position="76"/>
        <end position="99"/>
    </location>
</feature>
<feature type="transmembrane region" description="Helical; Name=3" evidence="1">
    <location>
        <begin position="100"/>
        <end position="120"/>
    </location>
</feature>
<feature type="topological domain" description="Cytoplasmic" evidence="1">
    <location>
        <begin position="121"/>
        <end position="139"/>
    </location>
</feature>
<feature type="transmembrane region" description="Helical; Name=4" evidence="1">
    <location>
        <begin position="140"/>
        <end position="160"/>
    </location>
</feature>
<feature type="topological domain" description="Extracellular" evidence="1">
    <location>
        <begin position="161"/>
        <end position="197"/>
    </location>
</feature>
<feature type="transmembrane region" description="Helical; Name=5" evidence="1">
    <location>
        <begin position="198"/>
        <end position="217"/>
    </location>
</feature>
<feature type="topological domain" description="Cytoplasmic" evidence="1">
    <location>
        <begin position="218"/>
        <end position="237"/>
    </location>
</feature>
<feature type="transmembrane region" description="Helical; Name=6" evidence="1">
    <location>
        <begin position="238"/>
        <end position="258"/>
    </location>
</feature>
<feature type="topological domain" description="Extracellular" evidence="1">
    <location>
        <begin position="259"/>
        <end position="271"/>
    </location>
</feature>
<feature type="transmembrane region" description="Helical; Name=7" evidence="1">
    <location>
        <begin position="272"/>
        <end position="292"/>
    </location>
</feature>
<feature type="topological domain" description="Cytoplasmic" evidence="1">
    <location>
        <begin position="293"/>
        <end position="313"/>
    </location>
</feature>
<feature type="glycosylation site" description="N-linked (GlcNAc...) asparagine" evidence="1">
    <location>
        <position position="5"/>
    </location>
</feature>
<feature type="glycosylation site" description="N-linked (GlcNAc...) asparagine" evidence="1">
    <location>
        <position position="265"/>
    </location>
</feature>
<name>O10K1_HUMAN</name>
<organism>
    <name type="scientific">Homo sapiens</name>
    <name type="common">Human</name>
    <dbReference type="NCBI Taxonomy" id="9606"/>
    <lineage>
        <taxon>Eukaryota</taxon>
        <taxon>Metazoa</taxon>
        <taxon>Chordata</taxon>
        <taxon>Craniata</taxon>
        <taxon>Vertebrata</taxon>
        <taxon>Euteleostomi</taxon>
        <taxon>Mammalia</taxon>
        <taxon>Eutheria</taxon>
        <taxon>Euarchontoglires</taxon>
        <taxon>Primates</taxon>
        <taxon>Haplorrhini</taxon>
        <taxon>Catarrhini</taxon>
        <taxon>Hominidae</taxon>
        <taxon>Homo</taxon>
    </lineage>
</organism>
<protein>
    <recommendedName>
        <fullName>Olfactory receptor 10K1</fullName>
    </recommendedName>
    <alternativeName>
        <fullName>Olfactory receptor OR1-6</fullName>
    </alternativeName>
</protein>
<keyword id="KW-1003">Cell membrane</keyword>
<keyword id="KW-0297">G-protein coupled receptor</keyword>
<keyword id="KW-0325">Glycoprotein</keyword>
<keyword id="KW-0472">Membrane</keyword>
<keyword id="KW-0552">Olfaction</keyword>
<keyword id="KW-0675">Receptor</keyword>
<keyword id="KW-1185">Reference proteome</keyword>
<keyword id="KW-0716">Sensory transduction</keyword>
<keyword id="KW-0807">Transducer</keyword>
<keyword id="KW-0812">Transmembrane</keyword>
<keyword id="KW-1133">Transmembrane helix</keyword>
<dbReference type="EMBL" id="AB065641">
    <property type="protein sequence ID" value="BAC05867.1"/>
    <property type="molecule type" value="Genomic_DNA"/>
</dbReference>
<dbReference type="EMBL" id="AL365440">
    <property type="status" value="NOT_ANNOTATED_CDS"/>
    <property type="molecule type" value="Genomic_DNA"/>
</dbReference>
<dbReference type="EMBL" id="CH471121">
    <property type="protein sequence ID" value="EAW52825.1"/>
    <property type="molecule type" value="Genomic_DNA"/>
</dbReference>
<dbReference type="EMBL" id="BC137323">
    <property type="protein sequence ID" value="AAI37324.1"/>
    <property type="molecule type" value="mRNA"/>
</dbReference>
<dbReference type="EMBL" id="BC137324">
    <property type="protein sequence ID" value="AAI37325.1"/>
    <property type="molecule type" value="mRNA"/>
</dbReference>
<dbReference type="EMBL" id="BK004190">
    <property type="protein sequence ID" value="DAA04588.1"/>
    <property type="molecule type" value="Genomic_DNA"/>
</dbReference>
<dbReference type="CCDS" id="CCDS30897.1"/>
<dbReference type="RefSeq" id="NP_001004473.1">
    <property type="nucleotide sequence ID" value="NM_001004473.2"/>
</dbReference>
<dbReference type="SMR" id="Q8NGX5"/>
<dbReference type="BioGRID" id="133804">
    <property type="interactions" value="1"/>
</dbReference>
<dbReference type="FunCoup" id="Q8NGX5">
    <property type="interactions" value="417"/>
</dbReference>
<dbReference type="STRING" id="9606.ENSP00000493023"/>
<dbReference type="GlyCosmos" id="Q8NGX5">
    <property type="glycosylation" value="2 sites, No reported glycans"/>
</dbReference>
<dbReference type="GlyGen" id="Q8NGX5">
    <property type="glycosylation" value="3 sites, 1 O-linked glycan (1 site)"/>
</dbReference>
<dbReference type="iPTMnet" id="Q8NGX5"/>
<dbReference type="PhosphoSitePlus" id="Q8NGX5"/>
<dbReference type="BioMuta" id="OR10K1"/>
<dbReference type="DMDM" id="38372781"/>
<dbReference type="jPOST" id="Q8NGX5"/>
<dbReference type="PaxDb" id="9606-ENSP00000289451"/>
<dbReference type="PeptideAtlas" id="Q8NGX5"/>
<dbReference type="Antibodypedia" id="55022">
    <property type="antibodies" value="34 antibodies from 15 providers"/>
</dbReference>
<dbReference type="DNASU" id="391109"/>
<dbReference type="Ensembl" id="ENST00000641432.1">
    <property type="protein sequence ID" value="ENSP00000493023.1"/>
    <property type="gene ID" value="ENSG00000173285.5"/>
</dbReference>
<dbReference type="Ensembl" id="ENST00000641460.1">
    <property type="protein sequence ID" value="ENSP00000493278.1"/>
    <property type="gene ID" value="ENSG00000173285.5"/>
</dbReference>
<dbReference type="Ensembl" id="ENST00000641535.1">
    <property type="protein sequence ID" value="ENSP00000493025.1"/>
    <property type="gene ID" value="ENSG00000173285.5"/>
</dbReference>
<dbReference type="Ensembl" id="ENST00000641971.1">
    <property type="protein sequence ID" value="ENSP00000492890.1"/>
    <property type="gene ID" value="ENSG00000173285.5"/>
</dbReference>
<dbReference type="GeneID" id="391109"/>
<dbReference type="KEGG" id="hsa:391109"/>
<dbReference type="MANE-Select" id="ENST00000641535.1">
    <property type="protein sequence ID" value="ENSP00000493025.1"/>
    <property type="RefSeq nucleotide sequence ID" value="NM_001004473.2"/>
    <property type="RefSeq protein sequence ID" value="NP_001004473.1"/>
</dbReference>
<dbReference type="UCSC" id="uc010pij.2">
    <property type="organism name" value="human"/>
</dbReference>
<dbReference type="AGR" id="HGNC:14693"/>
<dbReference type="CTD" id="391109"/>
<dbReference type="GeneCards" id="OR10K1"/>
<dbReference type="HGNC" id="HGNC:14693">
    <property type="gene designation" value="OR10K1"/>
</dbReference>
<dbReference type="HPA" id="ENSG00000173285">
    <property type="expression patterns" value="Not detected"/>
</dbReference>
<dbReference type="neXtProt" id="NX_Q8NGX5"/>
<dbReference type="PharmGKB" id="PA31988"/>
<dbReference type="VEuPathDB" id="HostDB:ENSG00000173285"/>
<dbReference type="eggNOG" id="ENOG502QSAJ">
    <property type="taxonomic scope" value="Eukaryota"/>
</dbReference>
<dbReference type="GeneTree" id="ENSGT00940000161377"/>
<dbReference type="HOGENOM" id="CLU_012526_1_0_1"/>
<dbReference type="InParanoid" id="Q8NGX5"/>
<dbReference type="OMA" id="LFLGCCH"/>
<dbReference type="OrthoDB" id="9975554at2759"/>
<dbReference type="PAN-GO" id="Q8NGX5">
    <property type="GO annotations" value="4 GO annotations based on evolutionary models"/>
</dbReference>
<dbReference type="PhylomeDB" id="Q8NGX5"/>
<dbReference type="TreeFam" id="TF337249"/>
<dbReference type="PathwayCommons" id="Q8NGX5"/>
<dbReference type="Reactome" id="R-HSA-9752946">
    <property type="pathway name" value="Expression and translocation of olfactory receptors"/>
</dbReference>
<dbReference type="BioGRID-ORCS" id="391109">
    <property type="hits" value="6 hits in 742 CRISPR screens"/>
</dbReference>
<dbReference type="GeneWiki" id="OR10K1"/>
<dbReference type="GenomeRNAi" id="391109"/>
<dbReference type="Pharos" id="Q8NGX5">
    <property type="development level" value="Tdark"/>
</dbReference>
<dbReference type="PRO" id="PR:Q8NGX5"/>
<dbReference type="Proteomes" id="UP000005640">
    <property type="component" value="Chromosome 1"/>
</dbReference>
<dbReference type="RNAct" id="Q8NGX5">
    <property type="molecule type" value="protein"/>
</dbReference>
<dbReference type="Bgee" id="ENSG00000173285">
    <property type="expression patterns" value="Expressed in primordial germ cell in gonad and 6 other cell types or tissues"/>
</dbReference>
<dbReference type="ExpressionAtlas" id="Q8NGX5">
    <property type="expression patterns" value="baseline and differential"/>
</dbReference>
<dbReference type="GO" id="GO:0016020">
    <property type="term" value="C:membrane"/>
    <property type="evidence" value="ECO:0000318"/>
    <property type="project" value="GO_Central"/>
</dbReference>
<dbReference type="GO" id="GO:0005886">
    <property type="term" value="C:plasma membrane"/>
    <property type="evidence" value="ECO:0007669"/>
    <property type="project" value="UniProtKB-SubCell"/>
</dbReference>
<dbReference type="GO" id="GO:0004930">
    <property type="term" value="F:G protein-coupled receptor activity"/>
    <property type="evidence" value="ECO:0007669"/>
    <property type="project" value="UniProtKB-KW"/>
</dbReference>
<dbReference type="GO" id="GO:0005549">
    <property type="term" value="F:odorant binding"/>
    <property type="evidence" value="ECO:0000318"/>
    <property type="project" value="GO_Central"/>
</dbReference>
<dbReference type="GO" id="GO:0004984">
    <property type="term" value="F:olfactory receptor activity"/>
    <property type="evidence" value="ECO:0000318"/>
    <property type="project" value="GO_Central"/>
</dbReference>
<dbReference type="GO" id="GO:0050911">
    <property type="term" value="P:detection of chemical stimulus involved in sensory perception of smell"/>
    <property type="evidence" value="ECO:0000318"/>
    <property type="project" value="GO_Central"/>
</dbReference>
<dbReference type="CDD" id="cd15225">
    <property type="entry name" value="7tmA_OR10A-like"/>
    <property type="match status" value="1"/>
</dbReference>
<dbReference type="FunFam" id="1.10.1220.70:FF:000001">
    <property type="entry name" value="Olfactory receptor"/>
    <property type="match status" value="1"/>
</dbReference>
<dbReference type="FunFam" id="1.20.1070.10:FF:000151">
    <property type="entry name" value="olfactory receptor 10K1-like"/>
    <property type="match status" value="1"/>
</dbReference>
<dbReference type="Gene3D" id="1.20.1070.10">
    <property type="entry name" value="Rhodopsin 7-helix transmembrane proteins"/>
    <property type="match status" value="1"/>
</dbReference>
<dbReference type="InterPro" id="IPR000276">
    <property type="entry name" value="GPCR_Rhodpsn"/>
</dbReference>
<dbReference type="InterPro" id="IPR017452">
    <property type="entry name" value="GPCR_Rhodpsn_7TM"/>
</dbReference>
<dbReference type="InterPro" id="IPR000725">
    <property type="entry name" value="Olfact_rcpt"/>
</dbReference>
<dbReference type="PANTHER" id="PTHR26453">
    <property type="entry name" value="OLFACTORY RECEPTOR"/>
    <property type="match status" value="1"/>
</dbReference>
<dbReference type="Pfam" id="PF13853">
    <property type="entry name" value="7tm_4"/>
    <property type="match status" value="1"/>
</dbReference>
<dbReference type="PRINTS" id="PR00237">
    <property type="entry name" value="GPCRRHODOPSN"/>
</dbReference>
<dbReference type="PRINTS" id="PR00245">
    <property type="entry name" value="OLFACTORYR"/>
</dbReference>
<dbReference type="SUPFAM" id="SSF81321">
    <property type="entry name" value="Family A G protein-coupled receptor-like"/>
    <property type="match status" value="1"/>
</dbReference>
<dbReference type="PROSITE" id="PS50262">
    <property type="entry name" value="G_PROTEIN_RECEP_F1_2"/>
    <property type="match status" value="1"/>
</dbReference>